<dbReference type="EC" id="1.14.14.178" evidence="3"/>
<dbReference type="EMBL" id="AB206579">
    <property type="protein sequence ID" value="BAD90972.1"/>
    <property type="molecule type" value="mRNA"/>
</dbReference>
<dbReference type="EMBL" id="AC104473">
    <property type="protein sequence ID" value="AAN60994.1"/>
    <property type="status" value="ALT_INIT"/>
    <property type="molecule type" value="Genomic_DNA"/>
</dbReference>
<dbReference type="EMBL" id="DP000009">
    <property type="protein sequence ID" value="ABF94760.1"/>
    <property type="molecule type" value="Genomic_DNA"/>
</dbReference>
<dbReference type="EMBL" id="AP008209">
    <property type="protein sequence ID" value="BAF11361.2"/>
    <property type="molecule type" value="Genomic_DNA"/>
</dbReference>
<dbReference type="EMBL" id="AP014959">
    <property type="protein sequence ID" value="BAS83075.1"/>
    <property type="molecule type" value="Genomic_DNA"/>
</dbReference>
<dbReference type="EMBL" id="AK243298">
    <property type="protein sequence ID" value="BAH01529.1"/>
    <property type="molecule type" value="mRNA"/>
</dbReference>
<dbReference type="RefSeq" id="XP_015633105.1">
    <property type="nucleotide sequence ID" value="XM_015777619.1"/>
</dbReference>
<dbReference type="SMR" id="Q5CCK3"/>
<dbReference type="FunCoup" id="Q5CCK3">
    <property type="interactions" value="235"/>
</dbReference>
<dbReference type="STRING" id="39947.Q5CCK3"/>
<dbReference type="PaxDb" id="39947-Q5CCK3"/>
<dbReference type="EnsemblPlants" id="Os03t0227700-01">
    <property type="protein sequence ID" value="Os03t0227700-01"/>
    <property type="gene ID" value="Os03g0227700"/>
</dbReference>
<dbReference type="Gramene" id="Os03t0227700-01">
    <property type="protein sequence ID" value="Os03t0227700-01"/>
    <property type="gene ID" value="Os03g0227700"/>
</dbReference>
<dbReference type="KEGG" id="dosa:Os03g0227700"/>
<dbReference type="eggNOG" id="KOG0157">
    <property type="taxonomic scope" value="Eukaryota"/>
</dbReference>
<dbReference type="HOGENOM" id="CLU_001570_15_5_1"/>
<dbReference type="InParanoid" id="Q5CCK3"/>
<dbReference type="OMA" id="KLWNLYC"/>
<dbReference type="OrthoDB" id="1372046at2759"/>
<dbReference type="PlantReactome" id="R-OSA-1119456">
    <property type="pathway name" value="Brassinosteroid biosynthesis II"/>
</dbReference>
<dbReference type="UniPathway" id="UPA00381"/>
<dbReference type="Proteomes" id="UP000000763">
    <property type="component" value="Chromosome 3"/>
</dbReference>
<dbReference type="Proteomes" id="UP000059680">
    <property type="component" value="Chromosome 3"/>
</dbReference>
<dbReference type="GO" id="GO:0005783">
    <property type="term" value="C:endoplasmic reticulum"/>
    <property type="evidence" value="ECO:0007669"/>
    <property type="project" value="EnsemblPlants"/>
</dbReference>
<dbReference type="GO" id="GO:0016020">
    <property type="term" value="C:membrane"/>
    <property type="evidence" value="ECO:0007669"/>
    <property type="project" value="UniProtKB-SubCell"/>
</dbReference>
<dbReference type="GO" id="GO:0080132">
    <property type="term" value="F:fatty acid 2-hydroxylase activity"/>
    <property type="evidence" value="ECO:0000314"/>
    <property type="project" value="UniProtKB"/>
</dbReference>
<dbReference type="GO" id="GO:0020037">
    <property type="term" value="F:heme binding"/>
    <property type="evidence" value="ECO:0007669"/>
    <property type="project" value="InterPro"/>
</dbReference>
<dbReference type="GO" id="GO:0005506">
    <property type="term" value="F:iron ion binding"/>
    <property type="evidence" value="ECO:0007669"/>
    <property type="project" value="InterPro"/>
</dbReference>
<dbReference type="GO" id="GO:0004497">
    <property type="term" value="F:monooxygenase activity"/>
    <property type="evidence" value="ECO:0000314"/>
    <property type="project" value="Gramene"/>
</dbReference>
<dbReference type="GO" id="GO:0160191">
    <property type="term" value="F:steroid 22S-hydroxylase activity"/>
    <property type="evidence" value="ECO:0007669"/>
    <property type="project" value="RHEA"/>
</dbReference>
<dbReference type="GO" id="GO:0016132">
    <property type="term" value="P:brassinosteroid biosynthetic process"/>
    <property type="evidence" value="ECO:0000315"/>
    <property type="project" value="Gramene"/>
</dbReference>
<dbReference type="GO" id="GO:0010268">
    <property type="term" value="P:brassinosteroid homeostasis"/>
    <property type="evidence" value="ECO:0000318"/>
    <property type="project" value="GO_Central"/>
</dbReference>
<dbReference type="GO" id="GO:0009867">
    <property type="term" value="P:jasmonic acid mediated signaling pathway"/>
    <property type="evidence" value="ECO:0007669"/>
    <property type="project" value="EnsemblPlants"/>
</dbReference>
<dbReference type="GO" id="GO:0048366">
    <property type="term" value="P:leaf development"/>
    <property type="evidence" value="ECO:0000315"/>
    <property type="project" value="Gramene"/>
</dbReference>
<dbReference type="GO" id="GO:0010358">
    <property type="term" value="P:leaf shaping"/>
    <property type="evidence" value="ECO:0007669"/>
    <property type="project" value="EnsemblPlants"/>
</dbReference>
<dbReference type="GO" id="GO:0009741">
    <property type="term" value="P:response to brassinosteroid"/>
    <property type="evidence" value="ECO:0007669"/>
    <property type="project" value="EnsemblPlants"/>
</dbReference>
<dbReference type="GO" id="GO:0009826">
    <property type="term" value="P:unidimensional cell growth"/>
    <property type="evidence" value="ECO:0007669"/>
    <property type="project" value="EnsemblPlants"/>
</dbReference>
<dbReference type="CDD" id="cd11043">
    <property type="entry name" value="CYP90-like"/>
    <property type="match status" value="1"/>
</dbReference>
<dbReference type="FunFam" id="1.10.630.10:FF:000061">
    <property type="entry name" value="Cytochrome P450 90B1"/>
    <property type="match status" value="1"/>
</dbReference>
<dbReference type="Gene3D" id="1.10.630.10">
    <property type="entry name" value="Cytochrome P450"/>
    <property type="match status" value="1"/>
</dbReference>
<dbReference type="InterPro" id="IPR001128">
    <property type="entry name" value="Cyt_P450"/>
</dbReference>
<dbReference type="InterPro" id="IPR002401">
    <property type="entry name" value="Cyt_P450_E_grp-I"/>
</dbReference>
<dbReference type="InterPro" id="IPR036396">
    <property type="entry name" value="Cyt_P450_sf"/>
</dbReference>
<dbReference type="PANTHER" id="PTHR24286">
    <property type="entry name" value="CYTOCHROME P450 26"/>
    <property type="match status" value="1"/>
</dbReference>
<dbReference type="PANTHER" id="PTHR24286:SF194">
    <property type="entry name" value="STEROID (22S)-HYDROXYLASE"/>
    <property type="match status" value="1"/>
</dbReference>
<dbReference type="Pfam" id="PF00067">
    <property type="entry name" value="p450"/>
    <property type="match status" value="1"/>
</dbReference>
<dbReference type="PRINTS" id="PR00463">
    <property type="entry name" value="EP450I"/>
</dbReference>
<dbReference type="PRINTS" id="PR00385">
    <property type="entry name" value="P450"/>
</dbReference>
<dbReference type="SUPFAM" id="SSF48264">
    <property type="entry name" value="Cytochrome P450"/>
    <property type="match status" value="1"/>
</dbReference>
<accession>Q5CCK3</accession>
<accession>Q8H848</accession>
<organism>
    <name type="scientific">Oryza sativa subsp. japonica</name>
    <name type="common">Rice</name>
    <dbReference type="NCBI Taxonomy" id="39947"/>
    <lineage>
        <taxon>Eukaryota</taxon>
        <taxon>Viridiplantae</taxon>
        <taxon>Streptophyta</taxon>
        <taxon>Embryophyta</taxon>
        <taxon>Tracheophyta</taxon>
        <taxon>Spermatophyta</taxon>
        <taxon>Magnoliopsida</taxon>
        <taxon>Liliopsida</taxon>
        <taxon>Poales</taxon>
        <taxon>Poaceae</taxon>
        <taxon>BOP clade</taxon>
        <taxon>Oryzoideae</taxon>
        <taxon>Oryzeae</taxon>
        <taxon>Oryzinae</taxon>
        <taxon>Oryza</taxon>
        <taxon>Oryza sativa</taxon>
    </lineage>
</organism>
<reference key="1">
    <citation type="journal article" date="2006" name="Nat. Biotechnol.">
        <title>Erect leaves caused by brassinosteroid deficiency increase biomass production and grain yield in rice.</title>
        <authorList>
            <person name="Sakamoto T."/>
            <person name="Morinaka Y."/>
            <person name="Ohnishi T."/>
            <person name="Sunohara H."/>
            <person name="Fujioka S."/>
            <person name="Ueguchi-Tanaka M."/>
            <person name="Mizutani M."/>
            <person name="Sakata K."/>
            <person name="Takatsuto S."/>
            <person name="Yoshida S."/>
            <person name="Tanaka H."/>
            <person name="Kitano H."/>
            <person name="Matsuoka M."/>
        </authorList>
    </citation>
    <scope>NUCLEOTIDE SEQUENCE [MRNA]</scope>
    <scope>FUNCTION</scope>
    <scope>CATALYTIC ACTIVITY</scope>
    <scope>PATHWAY</scope>
    <scope>TISSUE SPECIFICITY</scope>
    <scope>INDUCTION</scope>
    <scope>BIOTECHNOLOGY</scope>
    <scope>DISRUPTION PHENOTYPE</scope>
    <source>
        <strain>cv. Nipponbare</strain>
    </source>
</reference>
<reference key="2">
    <citation type="journal article" date="2005" name="Genome Res.">
        <title>Sequence, annotation, and analysis of synteny between rice chromosome 3 and diverged grass species.</title>
        <authorList>
            <consortium name="The rice chromosome 3 sequencing consortium"/>
            <person name="Buell C.R."/>
            <person name="Yuan Q."/>
            <person name="Ouyang S."/>
            <person name="Liu J."/>
            <person name="Zhu W."/>
            <person name="Wang A."/>
            <person name="Maiti R."/>
            <person name="Haas B."/>
            <person name="Wortman J."/>
            <person name="Pertea M."/>
            <person name="Jones K.M."/>
            <person name="Kim M."/>
            <person name="Overton L."/>
            <person name="Tsitrin T."/>
            <person name="Fadrosh D."/>
            <person name="Bera J."/>
            <person name="Weaver B."/>
            <person name="Jin S."/>
            <person name="Johri S."/>
            <person name="Reardon M."/>
            <person name="Webb K."/>
            <person name="Hill J."/>
            <person name="Moffat K."/>
            <person name="Tallon L."/>
            <person name="Van Aken S."/>
            <person name="Lewis M."/>
            <person name="Utterback T."/>
            <person name="Feldblyum T."/>
            <person name="Zismann V."/>
            <person name="Iobst S."/>
            <person name="Hsiao J."/>
            <person name="de Vazeille A.R."/>
            <person name="Salzberg S.L."/>
            <person name="White O."/>
            <person name="Fraser C.M."/>
            <person name="Yu Y."/>
            <person name="Kim H."/>
            <person name="Rambo T."/>
            <person name="Currie J."/>
            <person name="Collura K."/>
            <person name="Kernodle-Thompson S."/>
            <person name="Wei F."/>
            <person name="Kudrna K."/>
            <person name="Ammiraju J.S.S."/>
            <person name="Luo M."/>
            <person name="Goicoechea J.L."/>
            <person name="Wing R.A."/>
            <person name="Henry D."/>
            <person name="Oates R."/>
            <person name="Palmer M."/>
            <person name="Pries G."/>
            <person name="Saski C."/>
            <person name="Simmons J."/>
            <person name="Soderlund C."/>
            <person name="Nelson W."/>
            <person name="de la Bastide M."/>
            <person name="Spiegel L."/>
            <person name="Nascimento L."/>
            <person name="Huang E."/>
            <person name="Preston R."/>
            <person name="Zutavern T."/>
            <person name="Palmer L."/>
            <person name="O'Shaughnessy A."/>
            <person name="Dike S."/>
            <person name="McCombie W.R."/>
            <person name="Minx P."/>
            <person name="Cordum H."/>
            <person name="Wilson R."/>
            <person name="Jin W."/>
            <person name="Lee H.R."/>
            <person name="Jiang J."/>
            <person name="Jackson S."/>
        </authorList>
    </citation>
    <scope>NUCLEOTIDE SEQUENCE [LARGE SCALE GENOMIC DNA]</scope>
    <source>
        <strain>cv. Nipponbare</strain>
    </source>
</reference>
<reference key="3">
    <citation type="journal article" date="2005" name="Nature">
        <title>The map-based sequence of the rice genome.</title>
        <authorList>
            <consortium name="International rice genome sequencing project (IRGSP)"/>
        </authorList>
    </citation>
    <scope>NUCLEOTIDE SEQUENCE [LARGE SCALE GENOMIC DNA]</scope>
    <source>
        <strain>cv. Nipponbare</strain>
    </source>
</reference>
<reference key="4">
    <citation type="journal article" date="2008" name="Nucleic Acids Res.">
        <title>The rice annotation project database (RAP-DB): 2008 update.</title>
        <authorList>
            <consortium name="The rice annotation project (RAP)"/>
        </authorList>
    </citation>
    <scope>GENOME REANNOTATION</scope>
    <source>
        <strain>cv. Nipponbare</strain>
    </source>
</reference>
<reference key="5">
    <citation type="journal article" date="2013" name="Rice">
        <title>Improvement of the Oryza sativa Nipponbare reference genome using next generation sequence and optical map data.</title>
        <authorList>
            <person name="Kawahara Y."/>
            <person name="de la Bastide M."/>
            <person name="Hamilton J.P."/>
            <person name="Kanamori H."/>
            <person name="McCombie W.R."/>
            <person name="Ouyang S."/>
            <person name="Schwartz D.C."/>
            <person name="Tanaka T."/>
            <person name="Wu J."/>
            <person name="Zhou S."/>
            <person name="Childs K.L."/>
            <person name="Davidson R.M."/>
            <person name="Lin H."/>
            <person name="Quesada-Ocampo L."/>
            <person name="Vaillancourt B."/>
            <person name="Sakai H."/>
            <person name="Lee S.S."/>
            <person name="Kim J."/>
            <person name="Numa H."/>
            <person name="Itoh T."/>
            <person name="Buell C.R."/>
            <person name="Matsumoto T."/>
        </authorList>
    </citation>
    <scope>GENOME REANNOTATION</scope>
    <source>
        <strain>cv. Nipponbare</strain>
    </source>
</reference>
<reference key="6">
    <citation type="journal article" date="2003" name="Science">
        <title>Collection, mapping, and annotation of over 28,000 cDNA clones from japonica rice.</title>
        <authorList>
            <consortium name="The rice full-length cDNA consortium"/>
        </authorList>
    </citation>
    <scope>NUCLEOTIDE SEQUENCE [LARGE SCALE MRNA]</scope>
    <source>
        <strain>cv. Nipponbare</strain>
    </source>
</reference>
<reference key="7">
    <citation type="journal article" date="2009" name="Plant Cell Physiol.">
        <title>Involvement of C-22-hydroxylated brassinosteroids in auxin-induced lamina joint bending in rice.</title>
        <authorList>
            <person name="Nakamura A."/>
            <person name="Fujioka S."/>
            <person name="Takatsuto S."/>
            <person name="Tsujimoto M."/>
            <person name="Kitano H."/>
            <person name="Yoshida S."/>
            <person name="Asami T."/>
            <person name="Nakano T."/>
        </authorList>
    </citation>
    <scope>FUNCTION</scope>
    <scope>DISRUPTION PHENOTYPE</scope>
</reference>
<proteinExistence type="evidence at protein level"/>
<feature type="chain" id="PRO_5008970268" description="Steroid (22S)-hydroxylase">
    <location>
        <begin position="1"/>
        <end position="506"/>
    </location>
</feature>
<feature type="transmembrane region" description="Helical" evidence="2">
    <location>
        <begin position="12"/>
        <end position="32"/>
    </location>
</feature>
<feature type="binding site" description="axial binding residue" evidence="1">
    <location>
        <position position="449"/>
    </location>
    <ligand>
        <name>heme</name>
        <dbReference type="ChEBI" id="CHEBI:30413"/>
    </ligand>
    <ligandPart>
        <name>Fe</name>
        <dbReference type="ChEBI" id="CHEBI:18248"/>
    </ligandPart>
</feature>
<evidence type="ECO:0000250" key="1">
    <source>
        <dbReference type="UniProtKB" id="P04798"/>
    </source>
</evidence>
<evidence type="ECO:0000255" key="2"/>
<evidence type="ECO:0000269" key="3">
    <source>
    </source>
</evidence>
<evidence type="ECO:0000269" key="4">
    <source>
    </source>
</evidence>
<evidence type="ECO:0000303" key="5">
    <source>
    </source>
</evidence>
<evidence type="ECO:0000303" key="6">
    <source>
    </source>
</evidence>
<evidence type="ECO:0000305" key="7"/>
<evidence type="ECO:0000312" key="8">
    <source>
        <dbReference type="EMBL" id="AAN60994.1"/>
    </source>
</evidence>
<evidence type="ECO:0000312" key="9">
    <source>
        <dbReference type="EMBL" id="ABF94760.1"/>
    </source>
</evidence>
<evidence type="ECO:0000312" key="10">
    <source>
        <dbReference type="EMBL" id="BAF11361.2"/>
    </source>
</evidence>
<comment type="function">
    <text evidence="3 4">Catalyzes the C22-alpha-hydroxylation step in brassinosteroid biosynthesis, which is the rate-limiting step in this biosynthetic pathway (PubMed:16369540). Catalyzes the conversion of campesterol (CR) to (22S)-22-hydroxycampesterol (22-OHCR, 22-hydroxyCR) and of campestanol (CN) to 6-deoxycathasterone (6-deoxoCT) (PubMed:16369540). Required for auxin responses involved in the regulation of epidermal cells length of the lamina joint (PubMed:19605414).</text>
</comment>
<comment type="catalytic activity">
    <reaction evidence="3">
        <text>a C28-steroid + reduced [NADPH--hemoprotein reductase] + O2 = a (22S)-22-hydroxy C28-steroid + oxidized [NADPH--hemoprotein reductase] + H2O + H(+)</text>
        <dbReference type="Rhea" id="RHEA:70063"/>
        <dbReference type="Rhea" id="RHEA-COMP:11964"/>
        <dbReference type="Rhea" id="RHEA-COMP:11965"/>
        <dbReference type="ChEBI" id="CHEBI:15377"/>
        <dbReference type="ChEBI" id="CHEBI:15378"/>
        <dbReference type="ChEBI" id="CHEBI:15379"/>
        <dbReference type="ChEBI" id="CHEBI:57618"/>
        <dbReference type="ChEBI" id="CHEBI:58210"/>
        <dbReference type="ChEBI" id="CHEBI:188921"/>
        <dbReference type="ChEBI" id="CHEBI:188922"/>
        <dbReference type="EC" id="1.14.14.178"/>
    </reaction>
    <physiologicalReaction direction="left-to-right" evidence="3">
        <dbReference type="Rhea" id="RHEA:70064"/>
    </physiologicalReaction>
</comment>
<comment type="catalytic activity">
    <reaction evidence="3">
        <text>campesterol + reduced [NADPH--hemoprotein reductase] + O2 = (22S)-22-hydroxycampesterol + oxidized [NADPH--hemoprotein reductase] + H2O + H(+)</text>
        <dbReference type="Rhea" id="RHEA:69835"/>
        <dbReference type="Rhea" id="RHEA-COMP:11964"/>
        <dbReference type="Rhea" id="RHEA-COMP:11965"/>
        <dbReference type="ChEBI" id="CHEBI:15377"/>
        <dbReference type="ChEBI" id="CHEBI:15378"/>
        <dbReference type="ChEBI" id="CHEBI:15379"/>
        <dbReference type="ChEBI" id="CHEBI:28623"/>
        <dbReference type="ChEBI" id="CHEBI:57618"/>
        <dbReference type="ChEBI" id="CHEBI:58210"/>
        <dbReference type="ChEBI" id="CHEBI:72331"/>
    </reaction>
    <physiologicalReaction direction="left-to-right" evidence="3">
        <dbReference type="Rhea" id="RHEA:69836"/>
    </physiologicalReaction>
</comment>
<comment type="catalytic activity">
    <reaction evidence="3">
        <text>campestanol + reduced [NADPH--hemoprotein reductase] + O2 = 6-deoxycathasterone + oxidized [NADPH--hemoprotein reductase] + H2O + H(+)</text>
        <dbReference type="Rhea" id="RHEA:69831"/>
        <dbReference type="Rhea" id="RHEA-COMP:11964"/>
        <dbReference type="Rhea" id="RHEA-COMP:11965"/>
        <dbReference type="ChEBI" id="CHEBI:15377"/>
        <dbReference type="ChEBI" id="CHEBI:15378"/>
        <dbReference type="ChEBI" id="CHEBI:15379"/>
        <dbReference type="ChEBI" id="CHEBI:20714"/>
        <dbReference type="ChEBI" id="CHEBI:36799"/>
        <dbReference type="ChEBI" id="CHEBI:57618"/>
        <dbReference type="ChEBI" id="CHEBI:58210"/>
    </reaction>
    <physiologicalReaction direction="left-to-right" evidence="3">
        <dbReference type="Rhea" id="RHEA:69832"/>
    </physiologicalReaction>
</comment>
<comment type="cofactor">
    <cofactor evidence="1">
        <name>heme</name>
        <dbReference type="ChEBI" id="CHEBI:30413"/>
    </cofactor>
</comment>
<comment type="pathway">
    <text evidence="3">Plant hormone biosynthesis; brassinosteroid biosynthesis.</text>
</comment>
<comment type="subcellular location">
    <subcellularLocation>
        <location evidence="2">Membrane</location>
        <topology evidence="2">Single-pass membrane protein</topology>
    </subcellularLocation>
</comment>
<comment type="tissue specificity">
    <text evidence="3">Highly expressed in roots and leaf blades. Expressed in shoot apex, stems, leaf sheaths, inflorescences and flowers.</text>
</comment>
<comment type="induction">
    <text evidence="3">Down-regulated by brassinolide (BL).</text>
</comment>
<comment type="disruption phenotype">
    <text evidence="3 4">Slight dwarf phenotype and erect leaves (PubMed:16369540). Impaired response to auxin leading to reduced epidermal cells length of the lamina joint (PubMed:19605414).</text>
</comment>
<comment type="biotechnology">
    <text evidence="3">Null mutant plants for CYP90B1/DWARF4 produce increased biomass and grain yield at high density planting.</text>
</comment>
<comment type="similarity">
    <text evidence="7">Belongs to the cytochrome P450 family.</text>
</comment>
<comment type="sequence caution" evidence="7">
    <conflict type="erroneous initiation">
        <sequence resource="EMBL-CDS" id="AAN60994"/>
    </conflict>
    <text>Truncated N-terminus.</text>
</comment>
<protein>
    <recommendedName>
        <fullName evidence="7">Steroid (22S)-hydroxylase</fullName>
        <ecNumber evidence="3">1.14.14.178</ecNumber>
    </recommendedName>
    <alternativeName>
        <fullName evidence="5">(22S)-22-hydroxycampesterol synthase</fullName>
    </alternativeName>
    <alternativeName>
        <fullName evidence="5">6-deoxycathasterone synthase</fullName>
    </alternativeName>
    <alternativeName>
        <fullName evidence="7">Cytochrome P450 90B2</fullName>
        <shortName evidence="7">OsCYP90B2</shortName>
    </alternativeName>
    <alternativeName>
        <fullName evidence="5">Protein DWARF4 homolog</fullName>
        <shortName evidence="5 6">OsDWARF4</shortName>
    </alternativeName>
    <alternativeName>
        <fullName evidence="7">Steroid 22-alpha-hydroxylase</fullName>
    </alternativeName>
</protein>
<keyword id="KW-1069">Brassinosteroid biosynthesis</keyword>
<keyword id="KW-0349">Heme</keyword>
<keyword id="KW-0408">Iron</keyword>
<keyword id="KW-0444">Lipid biosynthesis</keyword>
<keyword id="KW-0443">Lipid metabolism</keyword>
<keyword id="KW-0472">Membrane</keyword>
<keyword id="KW-0479">Metal-binding</keyword>
<keyword id="KW-0503">Monooxygenase</keyword>
<keyword id="KW-0560">Oxidoreductase</keyword>
<keyword id="KW-1185">Reference proteome</keyword>
<keyword id="KW-0752">Steroid biosynthesis</keyword>
<keyword id="KW-0812">Transmembrane</keyword>
<keyword id="KW-1133">Transmembrane helix</keyword>
<name>C90B2_ORYSJ</name>
<sequence length="506" mass="57329">MAAMMASITSELLFFLPFILLALLTFYTTTVAKCHGGHWWRGGTTPAKRKRMNLPPGAAGWPLVGETFGYLRAHPATSVGRFMEQHIARYGKIYRSSLFGERTVVSADAGLNRYILQNEGRLFECSYPRSIGGILGKWSMLVLVGDPHREMRAISLNFLSSVRLRAVLLPEVERHTLLVLRAWPPSSTFSAQHQAKKFTFNLMAKNIMSMDPGEEETERLRREYITFMKGVVSAPLNLPGTPYWKALKSRAAILGVIERKMEERVEKLSKEDASVEQDDLLGWALKQSNLSKEQILDLLLSLLFAGHETSSMALALAIFFLEGCPKAVQELREEHLGIARRQRLRGECKLSWEDYKEMVFTQCVINETLRLGNVVRFLHRKVIKDVHYKGYDIPSGWKILPVLAAVHLDSSLYEDPQRFNPWRWKSSGSSGGLAQSSSFMPYGGGTRLCAGSELAKLEMAVFLHHLVLNFRWELAEPDQAFVFPFVDFPKGLPIRVHRIAQDDEQE</sequence>
<gene>
    <name evidence="5" type="primary">CYP90B2</name>
    <name evidence="6" type="synonym">CYP90B1</name>
    <name evidence="5 6" type="synonym">DWARF4</name>
    <name evidence="10" type="ordered locus">Os03g0227700</name>
    <name evidence="9" type="ordered locus">LOC_Os03g12660</name>
    <name evidence="8" type="ORF">OJ1626B05.9</name>
</gene>